<dbReference type="EC" id="2.7.1.21" evidence="1"/>
<dbReference type="EMBL" id="AL591983">
    <property type="protein sequence ID" value="CAD00622.1"/>
    <property type="molecule type" value="Genomic_DNA"/>
</dbReference>
<dbReference type="PIR" id="AH1392">
    <property type="entry name" value="AH1392"/>
</dbReference>
<dbReference type="RefSeq" id="NP_466067.1">
    <property type="nucleotide sequence ID" value="NC_003210.1"/>
</dbReference>
<dbReference type="RefSeq" id="WP_003723476.1">
    <property type="nucleotide sequence ID" value="NZ_CP149495.1"/>
</dbReference>
<dbReference type="SMR" id="Q8Y4A7"/>
<dbReference type="STRING" id="169963.gene:17595255"/>
<dbReference type="PaxDb" id="169963-lmo2544"/>
<dbReference type="EnsemblBacteria" id="CAD00622">
    <property type="protein sequence ID" value="CAD00622"/>
    <property type="gene ID" value="CAD00622"/>
</dbReference>
<dbReference type="GeneID" id="986601"/>
<dbReference type="KEGG" id="lmo:lmo2544"/>
<dbReference type="PATRIC" id="fig|169963.11.peg.2606"/>
<dbReference type="eggNOG" id="COG1435">
    <property type="taxonomic scope" value="Bacteria"/>
</dbReference>
<dbReference type="HOGENOM" id="CLU_064400_2_2_9"/>
<dbReference type="OrthoDB" id="9781579at2"/>
<dbReference type="PhylomeDB" id="Q8Y4A7"/>
<dbReference type="BioCyc" id="LMON169963:LMO2544-MONOMER"/>
<dbReference type="Proteomes" id="UP000000817">
    <property type="component" value="Chromosome"/>
</dbReference>
<dbReference type="GO" id="GO:0005829">
    <property type="term" value="C:cytosol"/>
    <property type="evidence" value="ECO:0000318"/>
    <property type="project" value="GO_Central"/>
</dbReference>
<dbReference type="GO" id="GO:0005524">
    <property type="term" value="F:ATP binding"/>
    <property type="evidence" value="ECO:0007669"/>
    <property type="project" value="UniProtKB-UniRule"/>
</dbReference>
<dbReference type="GO" id="GO:0004797">
    <property type="term" value="F:thymidine kinase activity"/>
    <property type="evidence" value="ECO:0000318"/>
    <property type="project" value="GO_Central"/>
</dbReference>
<dbReference type="GO" id="GO:0008270">
    <property type="term" value="F:zinc ion binding"/>
    <property type="evidence" value="ECO:0007669"/>
    <property type="project" value="UniProtKB-UniRule"/>
</dbReference>
<dbReference type="GO" id="GO:0071897">
    <property type="term" value="P:DNA biosynthetic process"/>
    <property type="evidence" value="ECO:0007669"/>
    <property type="project" value="UniProtKB-KW"/>
</dbReference>
<dbReference type="GO" id="GO:0046104">
    <property type="term" value="P:thymidine metabolic process"/>
    <property type="evidence" value="ECO:0000318"/>
    <property type="project" value="GO_Central"/>
</dbReference>
<dbReference type="FunFam" id="3.30.60.20:FF:000062">
    <property type="entry name" value="Thymidine kinase"/>
    <property type="match status" value="1"/>
</dbReference>
<dbReference type="Gene3D" id="3.30.60.20">
    <property type="match status" value="1"/>
</dbReference>
<dbReference type="Gene3D" id="3.40.50.300">
    <property type="entry name" value="P-loop containing nucleotide triphosphate hydrolases"/>
    <property type="match status" value="1"/>
</dbReference>
<dbReference type="HAMAP" id="MF_00124">
    <property type="entry name" value="Thymidine_kinase"/>
    <property type="match status" value="1"/>
</dbReference>
<dbReference type="InterPro" id="IPR027417">
    <property type="entry name" value="P-loop_NTPase"/>
</dbReference>
<dbReference type="InterPro" id="IPR001267">
    <property type="entry name" value="Thymidine_kinase"/>
</dbReference>
<dbReference type="InterPro" id="IPR020633">
    <property type="entry name" value="Thymidine_kinase_CS"/>
</dbReference>
<dbReference type="NCBIfam" id="NF003299">
    <property type="entry name" value="PRK04296.1-4"/>
    <property type="match status" value="1"/>
</dbReference>
<dbReference type="NCBIfam" id="NF003300">
    <property type="entry name" value="PRK04296.1-5"/>
    <property type="match status" value="1"/>
</dbReference>
<dbReference type="PANTHER" id="PTHR11441">
    <property type="entry name" value="THYMIDINE KINASE"/>
    <property type="match status" value="1"/>
</dbReference>
<dbReference type="PANTHER" id="PTHR11441:SF0">
    <property type="entry name" value="THYMIDINE KINASE, CYTOSOLIC"/>
    <property type="match status" value="1"/>
</dbReference>
<dbReference type="Pfam" id="PF00265">
    <property type="entry name" value="TK"/>
    <property type="match status" value="1"/>
</dbReference>
<dbReference type="PIRSF" id="PIRSF035805">
    <property type="entry name" value="TK_cell"/>
    <property type="match status" value="1"/>
</dbReference>
<dbReference type="SUPFAM" id="SSF57716">
    <property type="entry name" value="Glucocorticoid receptor-like (DNA-binding domain)"/>
    <property type="match status" value="1"/>
</dbReference>
<dbReference type="SUPFAM" id="SSF52540">
    <property type="entry name" value="P-loop containing nucleoside triphosphate hydrolases"/>
    <property type="match status" value="1"/>
</dbReference>
<dbReference type="PROSITE" id="PS00603">
    <property type="entry name" value="TK_CELLULAR_TYPE"/>
    <property type="match status" value="1"/>
</dbReference>
<protein>
    <recommendedName>
        <fullName evidence="1">Thymidine kinase</fullName>
        <ecNumber evidence="1">2.7.1.21</ecNumber>
    </recommendedName>
</protein>
<proteinExistence type="inferred from homology"/>
<name>KITH_LISMO</name>
<feature type="chain" id="PRO_0000174990" description="Thymidine kinase">
    <location>
        <begin position="1"/>
        <end position="191"/>
    </location>
</feature>
<feature type="active site" description="Proton acceptor" evidence="1">
    <location>
        <position position="86"/>
    </location>
</feature>
<feature type="binding site" evidence="1">
    <location>
        <begin position="9"/>
        <end position="16"/>
    </location>
    <ligand>
        <name>ATP</name>
        <dbReference type="ChEBI" id="CHEBI:30616"/>
    </ligand>
</feature>
<feature type="binding site" evidence="1">
    <location>
        <begin position="85"/>
        <end position="88"/>
    </location>
    <ligand>
        <name>ATP</name>
        <dbReference type="ChEBI" id="CHEBI:30616"/>
    </ligand>
</feature>
<feature type="binding site" evidence="1">
    <location>
        <position position="143"/>
    </location>
    <ligand>
        <name>Zn(2+)</name>
        <dbReference type="ChEBI" id="CHEBI:29105"/>
    </ligand>
</feature>
<feature type="binding site" evidence="1">
    <location>
        <position position="146"/>
    </location>
    <ligand>
        <name>Zn(2+)</name>
        <dbReference type="ChEBI" id="CHEBI:29105"/>
    </ligand>
</feature>
<feature type="binding site" evidence="1">
    <location>
        <position position="181"/>
    </location>
    <ligand>
        <name>Zn(2+)</name>
        <dbReference type="ChEBI" id="CHEBI:29105"/>
    </ligand>
</feature>
<feature type="binding site" evidence="1">
    <location>
        <position position="184"/>
    </location>
    <ligand>
        <name>Zn(2+)</name>
        <dbReference type="ChEBI" id="CHEBI:29105"/>
    </ligand>
</feature>
<sequence>MAQLFFRYGSMNSGKTIEILKVAHNYEEQNKTVAIFTSGIDDRDQVGFISSRIGLKREATPIFSDTNIFEIVVNIKPKPNCVLLDESQFLEKEHVFQLAKIVDELNIPVIAYGLKNDFRNELFEGSKYLLLYADKLEEMKTICWFCAKKATMVLRVDDKGKPVYTGEQIMIGGNDHYYPVCRKCHANPPIK</sequence>
<gene>
    <name evidence="1" type="primary">tdk</name>
    <name type="ordered locus">lmo2544</name>
</gene>
<reference key="1">
    <citation type="journal article" date="2001" name="Science">
        <title>Comparative genomics of Listeria species.</title>
        <authorList>
            <person name="Glaser P."/>
            <person name="Frangeul L."/>
            <person name="Buchrieser C."/>
            <person name="Rusniok C."/>
            <person name="Amend A."/>
            <person name="Baquero F."/>
            <person name="Berche P."/>
            <person name="Bloecker H."/>
            <person name="Brandt P."/>
            <person name="Chakraborty T."/>
            <person name="Charbit A."/>
            <person name="Chetouani F."/>
            <person name="Couve E."/>
            <person name="de Daruvar A."/>
            <person name="Dehoux P."/>
            <person name="Domann E."/>
            <person name="Dominguez-Bernal G."/>
            <person name="Duchaud E."/>
            <person name="Durant L."/>
            <person name="Dussurget O."/>
            <person name="Entian K.-D."/>
            <person name="Fsihi H."/>
            <person name="Garcia-del Portillo F."/>
            <person name="Garrido P."/>
            <person name="Gautier L."/>
            <person name="Goebel W."/>
            <person name="Gomez-Lopez N."/>
            <person name="Hain T."/>
            <person name="Hauf J."/>
            <person name="Jackson D."/>
            <person name="Jones L.-M."/>
            <person name="Kaerst U."/>
            <person name="Kreft J."/>
            <person name="Kuhn M."/>
            <person name="Kunst F."/>
            <person name="Kurapkat G."/>
            <person name="Madueno E."/>
            <person name="Maitournam A."/>
            <person name="Mata Vicente J."/>
            <person name="Ng E."/>
            <person name="Nedjari H."/>
            <person name="Nordsiek G."/>
            <person name="Novella S."/>
            <person name="de Pablos B."/>
            <person name="Perez-Diaz J.-C."/>
            <person name="Purcell R."/>
            <person name="Remmel B."/>
            <person name="Rose M."/>
            <person name="Schlueter T."/>
            <person name="Simoes N."/>
            <person name="Tierrez A."/>
            <person name="Vazquez-Boland J.-A."/>
            <person name="Voss H."/>
            <person name="Wehland J."/>
            <person name="Cossart P."/>
        </authorList>
    </citation>
    <scope>NUCLEOTIDE SEQUENCE [LARGE SCALE GENOMIC DNA]</scope>
    <source>
        <strain>ATCC BAA-679 / EGD-e</strain>
    </source>
</reference>
<accession>Q8Y4A7</accession>
<evidence type="ECO:0000255" key="1">
    <source>
        <dbReference type="HAMAP-Rule" id="MF_00124"/>
    </source>
</evidence>
<organism>
    <name type="scientific">Listeria monocytogenes serovar 1/2a (strain ATCC BAA-679 / EGD-e)</name>
    <dbReference type="NCBI Taxonomy" id="169963"/>
    <lineage>
        <taxon>Bacteria</taxon>
        <taxon>Bacillati</taxon>
        <taxon>Bacillota</taxon>
        <taxon>Bacilli</taxon>
        <taxon>Bacillales</taxon>
        <taxon>Listeriaceae</taxon>
        <taxon>Listeria</taxon>
    </lineage>
</organism>
<keyword id="KW-0067">ATP-binding</keyword>
<keyword id="KW-0963">Cytoplasm</keyword>
<keyword id="KW-0237">DNA synthesis</keyword>
<keyword id="KW-0418">Kinase</keyword>
<keyword id="KW-0479">Metal-binding</keyword>
<keyword id="KW-0547">Nucleotide-binding</keyword>
<keyword id="KW-1185">Reference proteome</keyword>
<keyword id="KW-0808">Transferase</keyword>
<keyword id="KW-0862">Zinc</keyword>
<comment type="catalytic activity">
    <reaction evidence="1">
        <text>thymidine + ATP = dTMP + ADP + H(+)</text>
        <dbReference type="Rhea" id="RHEA:19129"/>
        <dbReference type="ChEBI" id="CHEBI:15378"/>
        <dbReference type="ChEBI" id="CHEBI:17748"/>
        <dbReference type="ChEBI" id="CHEBI:30616"/>
        <dbReference type="ChEBI" id="CHEBI:63528"/>
        <dbReference type="ChEBI" id="CHEBI:456216"/>
        <dbReference type="EC" id="2.7.1.21"/>
    </reaction>
</comment>
<comment type="subunit">
    <text evidence="1">Homotetramer.</text>
</comment>
<comment type="subcellular location">
    <subcellularLocation>
        <location evidence="1">Cytoplasm</location>
    </subcellularLocation>
</comment>
<comment type="similarity">
    <text evidence="1">Belongs to the thymidine kinase family.</text>
</comment>